<comment type="function">
    <text evidence="1 2">Toxic component of a type II toxin-antitoxin (TA) system. An RNase (By similarity). Upon expression in M.smegmatis inhibits colony formation. Its toxic effect is neutralized by coexpression with cognate antitoxin VapB39.</text>
</comment>
<comment type="cofactor">
    <cofactor evidence="1">
        <name>Mg(2+)</name>
        <dbReference type="ChEBI" id="CHEBI:18420"/>
    </cofactor>
</comment>
<comment type="subcellular location">
    <subcellularLocation>
        <location>Secreted</location>
    </subcellularLocation>
    <text evidence="3">Following 6 weeks of nutrient starvation.</text>
</comment>
<comment type="similarity">
    <text evidence="1">Belongs to the PINc/VapC protein family.</text>
</comment>
<gene>
    <name evidence="1" type="primary">vapC39</name>
    <name type="ordered locus">Rv2530c</name>
</gene>
<name>VPC39_MYCTU</name>
<keyword id="KW-0378">Hydrolase</keyword>
<keyword id="KW-0460">Magnesium</keyword>
<keyword id="KW-0479">Metal-binding</keyword>
<keyword id="KW-0540">Nuclease</keyword>
<keyword id="KW-1185">Reference proteome</keyword>
<keyword id="KW-0964">Secreted</keyword>
<keyword id="KW-1277">Toxin-antitoxin system</keyword>
<reference key="1">
    <citation type="journal article" date="1998" name="Nature">
        <title>Deciphering the biology of Mycobacterium tuberculosis from the complete genome sequence.</title>
        <authorList>
            <person name="Cole S.T."/>
            <person name="Brosch R."/>
            <person name="Parkhill J."/>
            <person name="Garnier T."/>
            <person name="Churcher C.M."/>
            <person name="Harris D.E."/>
            <person name="Gordon S.V."/>
            <person name="Eiglmeier K."/>
            <person name="Gas S."/>
            <person name="Barry C.E. III"/>
            <person name="Tekaia F."/>
            <person name="Badcock K."/>
            <person name="Basham D."/>
            <person name="Brown D."/>
            <person name="Chillingworth T."/>
            <person name="Connor R."/>
            <person name="Davies R.M."/>
            <person name="Devlin K."/>
            <person name="Feltwell T."/>
            <person name="Gentles S."/>
            <person name="Hamlin N."/>
            <person name="Holroyd S."/>
            <person name="Hornsby T."/>
            <person name="Jagels K."/>
            <person name="Krogh A."/>
            <person name="McLean J."/>
            <person name="Moule S."/>
            <person name="Murphy L.D."/>
            <person name="Oliver S."/>
            <person name="Osborne J."/>
            <person name="Quail M.A."/>
            <person name="Rajandream M.A."/>
            <person name="Rogers J."/>
            <person name="Rutter S."/>
            <person name="Seeger K."/>
            <person name="Skelton S."/>
            <person name="Squares S."/>
            <person name="Squares R."/>
            <person name="Sulston J.E."/>
            <person name="Taylor K."/>
            <person name="Whitehead S."/>
            <person name="Barrell B.G."/>
        </authorList>
    </citation>
    <scope>NUCLEOTIDE SEQUENCE [LARGE SCALE GENOMIC DNA]</scope>
    <source>
        <strain>ATCC 25618 / H37Rv</strain>
    </source>
</reference>
<reference key="2">
    <citation type="journal article" date="2009" name="PLoS Genet.">
        <title>Comprehensive functional analysis of Mycobacterium tuberculosis toxin-antitoxin systems: implications for pathogenesis, stress responses, and evolution.</title>
        <authorList>
            <person name="Ramage H.R."/>
            <person name="Connolly L.E."/>
            <person name="Cox J.S."/>
        </authorList>
    </citation>
    <scope>EXPRESSION IN M.SMEGMATIS</scope>
    <scope>FUNCTION AS A TOXIN</scope>
    <source>
        <strain>ATCC 35801 / TMC 107 / Erdman</strain>
    </source>
</reference>
<reference key="3">
    <citation type="journal article" date="2011" name="Mol. Cell. Proteomics">
        <title>Proteogenomic analysis of Mycobacterium tuberculosis by high resolution mass spectrometry.</title>
        <authorList>
            <person name="Kelkar D.S."/>
            <person name="Kumar D."/>
            <person name="Kumar P."/>
            <person name="Balakrishnan L."/>
            <person name="Muthusamy B."/>
            <person name="Yadav A.K."/>
            <person name="Shrivastava P."/>
            <person name="Marimuthu A."/>
            <person name="Anand S."/>
            <person name="Sundaram H."/>
            <person name="Kingsbury R."/>
            <person name="Harsha H.C."/>
            <person name="Nair B."/>
            <person name="Prasad T.S."/>
            <person name="Chauhan D.S."/>
            <person name="Katoch K."/>
            <person name="Katoch V.M."/>
            <person name="Kumar P."/>
            <person name="Chaerkady R."/>
            <person name="Ramachandran S."/>
            <person name="Dash D."/>
            <person name="Pandey A."/>
        </authorList>
    </citation>
    <scope>IDENTIFICATION BY MASS SPECTROMETRY [LARGE SCALE ANALYSIS]</scope>
    <source>
        <strain>ATCC 25618 / H37Rv</strain>
    </source>
</reference>
<reference key="4">
    <citation type="journal article" date="2013" name="Mol. Cell. Proteomics">
        <title>Proteomic profiling of Mycobacterium tuberculosis identifies nutrient-starvation-responsive toxin-antitoxin systems.</title>
        <authorList>
            <person name="Albrethsen J."/>
            <person name="Agner J."/>
            <person name="Piersma S.R."/>
            <person name="Hoejrup P."/>
            <person name="Pham T.V."/>
            <person name="Weldingh K."/>
            <person name="Jimenez C.R."/>
            <person name="Andersen P."/>
            <person name="Rosenkrands I."/>
        </authorList>
    </citation>
    <scope>IDENTIFICATION BY MASS SPECTROMETRY</scope>
    <scope>SUBCELLULAR LOCATION</scope>
    <source>
        <strain>ATCC 27294 / TMC 102 / H37Rv</strain>
    </source>
</reference>
<dbReference type="EC" id="3.1.-.-" evidence="1"/>
<dbReference type="EMBL" id="AL123456">
    <property type="protein sequence ID" value="CCP45324.1"/>
    <property type="molecule type" value="Genomic_DNA"/>
</dbReference>
<dbReference type="PIR" id="F70657">
    <property type="entry name" value="F70657"/>
</dbReference>
<dbReference type="RefSeq" id="NP_217046.1">
    <property type="nucleotide sequence ID" value="NC_000962.3"/>
</dbReference>
<dbReference type="RefSeq" id="WP_003412970.1">
    <property type="nucleotide sequence ID" value="NZ_NVQJ01000032.1"/>
</dbReference>
<dbReference type="SMR" id="P9WF63"/>
<dbReference type="STRING" id="83332.Rv2530c"/>
<dbReference type="PaxDb" id="83332-Rv2530c"/>
<dbReference type="DNASU" id="887192"/>
<dbReference type="GeneID" id="887192"/>
<dbReference type="KEGG" id="mtu:Rv2530c"/>
<dbReference type="KEGG" id="mtv:RVBD_2530c"/>
<dbReference type="TubercuList" id="Rv2530c"/>
<dbReference type="eggNOG" id="COG1848">
    <property type="taxonomic scope" value="Bacteria"/>
</dbReference>
<dbReference type="InParanoid" id="P9WF63"/>
<dbReference type="OrthoDB" id="196567at2"/>
<dbReference type="PhylomeDB" id="P9WF63"/>
<dbReference type="Proteomes" id="UP000001584">
    <property type="component" value="Chromosome"/>
</dbReference>
<dbReference type="GO" id="GO:0005576">
    <property type="term" value="C:extracellular region"/>
    <property type="evidence" value="ECO:0007669"/>
    <property type="project" value="UniProtKB-SubCell"/>
</dbReference>
<dbReference type="GO" id="GO:0000287">
    <property type="term" value="F:magnesium ion binding"/>
    <property type="evidence" value="ECO:0007669"/>
    <property type="project" value="UniProtKB-UniRule"/>
</dbReference>
<dbReference type="GO" id="GO:0004540">
    <property type="term" value="F:RNA nuclease activity"/>
    <property type="evidence" value="ECO:0007669"/>
    <property type="project" value="InterPro"/>
</dbReference>
<dbReference type="GO" id="GO:0045926">
    <property type="term" value="P:negative regulation of growth"/>
    <property type="evidence" value="ECO:0000315"/>
    <property type="project" value="MTBBASE"/>
</dbReference>
<dbReference type="CDD" id="cd18678">
    <property type="entry name" value="PIN_MtVapC25_VapC33-like"/>
    <property type="match status" value="1"/>
</dbReference>
<dbReference type="Gene3D" id="3.40.50.1010">
    <property type="entry name" value="5'-nuclease"/>
    <property type="match status" value="1"/>
</dbReference>
<dbReference type="HAMAP" id="MF_00265">
    <property type="entry name" value="VapC_Nob1"/>
    <property type="match status" value="1"/>
</dbReference>
<dbReference type="InterPro" id="IPR006226">
    <property type="entry name" value="Mtu_PIN"/>
</dbReference>
<dbReference type="InterPro" id="IPR029060">
    <property type="entry name" value="PIN-like_dom_sf"/>
</dbReference>
<dbReference type="InterPro" id="IPR002716">
    <property type="entry name" value="PIN_dom"/>
</dbReference>
<dbReference type="InterPro" id="IPR022907">
    <property type="entry name" value="VapC_family"/>
</dbReference>
<dbReference type="NCBIfam" id="TIGR00028">
    <property type="entry name" value="Mtu_PIN_fam"/>
    <property type="match status" value="1"/>
</dbReference>
<dbReference type="Pfam" id="PF01850">
    <property type="entry name" value="PIN"/>
    <property type="match status" value="1"/>
</dbReference>
<dbReference type="SUPFAM" id="SSF88723">
    <property type="entry name" value="PIN domain-like"/>
    <property type="match status" value="1"/>
</dbReference>
<feature type="chain" id="PRO_0000407894" description="Ribonuclease VapC39">
    <location>
        <begin position="1"/>
        <end position="139"/>
    </location>
</feature>
<feature type="domain" description="PINc" evidence="1">
    <location>
        <begin position="4"/>
        <end position="133"/>
    </location>
</feature>
<feature type="binding site" evidence="1">
    <location>
        <position position="6"/>
    </location>
    <ligand>
        <name>Mg(2+)</name>
        <dbReference type="ChEBI" id="CHEBI:18420"/>
    </ligand>
</feature>
<feature type="binding site" evidence="1">
    <location>
        <position position="106"/>
    </location>
    <ligand>
        <name>Mg(2+)</name>
        <dbReference type="ChEBI" id="CHEBI:18420"/>
    </ligand>
</feature>
<organism>
    <name type="scientific">Mycobacterium tuberculosis (strain ATCC 25618 / H37Rv)</name>
    <dbReference type="NCBI Taxonomy" id="83332"/>
    <lineage>
        <taxon>Bacteria</taxon>
        <taxon>Bacillati</taxon>
        <taxon>Actinomycetota</taxon>
        <taxon>Actinomycetes</taxon>
        <taxon>Mycobacteriales</taxon>
        <taxon>Mycobacteriaceae</taxon>
        <taxon>Mycobacterium</taxon>
        <taxon>Mycobacterium tuberculosis complex</taxon>
    </lineage>
</organism>
<sequence length="139" mass="14765">MTALLDVNVLIALGWPNHVHHAAAQRWFTQFSSNGWATTPITEAGYVRISSNRSVMQVSTTPAIAIAQLAAMTSLAGHTFWPDDVPLIVGSAGDRDAVSNHRRVTDCHLIALAARYGGRLVTFDAALADSASAGLVEVL</sequence>
<protein>
    <recommendedName>
        <fullName evidence="1">Ribonuclease VapC39</fullName>
        <shortName evidence="1">RNase VapC39</shortName>
        <ecNumber evidence="1">3.1.-.-</ecNumber>
    </recommendedName>
    <alternativeName>
        <fullName evidence="1">Toxin VapC39</fullName>
    </alternativeName>
</protein>
<evidence type="ECO:0000255" key="1">
    <source>
        <dbReference type="HAMAP-Rule" id="MF_00265"/>
    </source>
</evidence>
<evidence type="ECO:0000269" key="2">
    <source>
    </source>
</evidence>
<evidence type="ECO:0000269" key="3">
    <source>
    </source>
</evidence>
<proteinExistence type="evidence at protein level"/>
<accession>P9WF63</accession>
<accession>L0TBH2</accession>
<accession>P95023</accession>
<accession>Q7D6Y8</accession>